<proteinExistence type="inferred from homology"/>
<protein>
    <recommendedName>
        <fullName evidence="1">3-hydroxydecanoyl-[acyl-carrier-protein] dehydratase</fullName>
        <ecNumber evidence="1">4.2.1.59</ecNumber>
    </recommendedName>
    <alternativeName>
        <fullName evidence="1">3-hydroxyacyl-[acyl-carrier-protein] dehydratase FabA</fullName>
    </alternativeName>
    <alternativeName>
        <fullName evidence="1">Beta-hydroxydecanoyl thioester dehydrase</fullName>
    </alternativeName>
    <alternativeName>
        <fullName evidence="1">Trans-2-decenoyl-[acyl-carrier-protein] isomerase</fullName>
        <ecNumber evidence="1">5.3.3.14</ecNumber>
    </alternativeName>
</protein>
<sequence length="171" mass="18791">MTKQHAFTREDLLRCSRGELFGPGNAQLPAPNMLMVDRITHISEEGGKYGKGELVAELDINPDLWFFACHFEGDPVMPGCLGLDAMWQLVGFFLGWQGLPGRGRALGSGEVKFFGQVLPEAKKVTYNIHIKRVLKGKLNMAIADGSVSVDGREIYTAEGLRVGVFTSTDNF</sequence>
<feature type="chain" id="PRO_0000091607" description="3-hydroxydecanoyl-[acyl-carrier-protein] dehydratase">
    <location>
        <begin position="1"/>
        <end position="171"/>
    </location>
</feature>
<feature type="active site" evidence="1">
    <location>
        <position position="70"/>
    </location>
</feature>
<name>FABA_PSEPK</name>
<accession>Q88FC4</accession>
<comment type="function">
    <text evidence="1">Necessary for the introduction of cis unsaturation into fatty acids. Catalyzes the dehydration of (3R)-3-hydroxydecanoyl-ACP to E-(2)-decenoyl-ACP and then its isomerization to Z-(3)-decenoyl-ACP. Can catalyze the dehydratase reaction for beta-hydroxyacyl-ACPs with saturated chain lengths up to 16:0, being most active on intermediate chain length.</text>
</comment>
<comment type="catalytic activity">
    <reaction evidence="1">
        <text>a (3R)-hydroxyacyl-[ACP] = a (2E)-enoyl-[ACP] + H2O</text>
        <dbReference type="Rhea" id="RHEA:13097"/>
        <dbReference type="Rhea" id="RHEA-COMP:9925"/>
        <dbReference type="Rhea" id="RHEA-COMP:9945"/>
        <dbReference type="ChEBI" id="CHEBI:15377"/>
        <dbReference type="ChEBI" id="CHEBI:78784"/>
        <dbReference type="ChEBI" id="CHEBI:78827"/>
        <dbReference type="EC" id="4.2.1.59"/>
    </reaction>
</comment>
<comment type="catalytic activity">
    <reaction evidence="1">
        <text>(3R)-hydroxydecanoyl-[ACP] = (2E)-decenoyl-[ACP] + H2O</text>
        <dbReference type="Rhea" id="RHEA:41860"/>
        <dbReference type="Rhea" id="RHEA-COMP:9638"/>
        <dbReference type="Rhea" id="RHEA-COMP:9639"/>
        <dbReference type="ChEBI" id="CHEBI:15377"/>
        <dbReference type="ChEBI" id="CHEBI:78466"/>
        <dbReference type="ChEBI" id="CHEBI:78467"/>
    </reaction>
</comment>
<comment type="catalytic activity">
    <reaction evidence="1">
        <text>(2E)-decenoyl-[ACP] = (3Z)-decenoyl-[ACP]</text>
        <dbReference type="Rhea" id="RHEA:23568"/>
        <dbReference type="Rhea" id="RHEA-COMP:9639"/>
        <dbReference type="Rhea" id="RHEA-COMP:9927"/>
        <dbReference type="ChEBI" id="CHEBI:78467"/>
        <dbReference type="ChEBI" id="CHEBI:78798"/>
        <dbReference type="EC" id="5.3.3.14"/>
    </reaction>
</comment>
<comment type="pathway">
    <text evidence="1">Lipid metabolism; fatty acid biosynthesis.</text>
</comment>
<comment type="subunit">
    <text evidence="1">Homodimer.</text>
</comment>
<comment type="subcellular location">
    <subcellularLocation>
        <location evidence="1">Cytoplasm</location>
    </subcellularLocation>
</comment>
<comment type="similarity">
    <text evidence="1">Belongs to the thioester dehydratase family. FabA subfamily.</text>
</comment>
<evidence type="ECO:0000255" key="1">
    <source>
        <dbReference type="HAMAP-Rule" id="MF_00405"/>
    </source>
</evidence>
<organism>
    <name type="scientific">Pseudomonas putida (strain ATCC 47054 / DSM 6125 / CFBP 8728 / NCIMB 11950 / KT2440)</name>
    <dbReference type="NCBI Taxonomy" id="160488"/>
    <lineage>
        <taxon>Bacteria</taxon>
        <taxon>Pseudomonadati</taxon>
        <taxon>Pseudomonadota</taxon>
        <taxon>Gammaproteobacteria</taxon>
        <taxon>Pseudomonadales</taxon>
        <taxon>Pseudomonadaceae</taxon>
        <taxon>Pseudomonas</taxon>
    </lineage>
</organism>
<dbReference type="EC" id="4.2.1.59" evidence="1"/>
<dbReference type="EC" id="5.3.3.14" evidence="1"/>
<dbReference type="EMBL" id="AE015451">
    <property type="protein sequence ID" value="AAN69755.1"/>
    <property type="molecule type" value="Genomic_DNA"/>
</dbReference>
<dbReference type="RefSeq" id="NP_746291.1">
    <property type="nucleotide sequence ID" value="NC_002947.4"/>
</dbReference>
<dbReference type="RefSeq" id="WP_003251509.1">
    <property type="nucleotide sequence ID" value="NZ_CP169744.1"/>
</dbReference>
<dbReference type="SMR" id="Q88FC4"/>
<dbReference type="STRING" id="160488.PP_4174"/>
<dbReference type="PaxDb" id="160488-PP_4174"/>
<dbReference type="GeneID" id="97169124"/>
<dbReference type="KEGG" id="ppu:PP_4174"/>
<dbReference type="PATRIC" id="fig|160488.4.peg.4436"/>
<dbReference type="eggNOG" id="COG0764">
    <property type="taxonomic scope" value="Bacteria"/>
</dbReference>
<dbReference type="HOGENOM" id="CLU_097925_0_0_6"/>
<dbReference type="OrthoDB" id="9786735at2"/>
<dbReference type="PhylomeDB" id="Q88FC4"/>
<dbReference type="BioCyc" id="PPUT160488:G1G01-4440-MONOMER"/>
<dbReference type="UniPathway" id="UPA00094"/>
<dbReference type="Proteomes" id="UP000000556">
    <property type="component" value="Chromosome"/>
</dbReference>
<dbReference type="GO" id="GO:0005737">
    <property type="term" value="C:cytoplasm"/>
    <property type="evidence" value="ECO:0007669"/>
    <property type="project" value="UniProtKB-SubCell"/>
</dbReference>
<dbReference type="GO" id="GO:0019171">
    <property type="term" value="F:(3R)-hydroxyacyl-[acyl-carrier-protein] dehydratase activity"/>
    <property type="evidence" value="ECO:0007669"/>
    <property type="project" value="UniProtKB-UniRule"/>
</dbReference>
<dbReference type="GO" id="GO:0034017">
    <property type="term" value="F:trans-2-decenoyl-acyl-carrier-protein isomerase activity"/>
    <property type="evidence" value="ECO:0007669"/>
    <property type="project" value="UniProtKB-UniRule"/>
</dbReference>
<dbReference type="GO" id="GO:0006636">
    <property type="term" value="P:unsaturated fatty acid biosynthetic process"/>
    <property type="evidence" value="ECO:0007669"/>
    <property type="project" value="UniProtKB-UniRule"/>
</dbReference>
<dbReference type="CDD" id="cd01287">
    <property type="entry name" value="FabA"/>
    <property type="match status" value="1"/>
</dbReference>
<dbReference type="FunFam" id="3.10.129.10:FF:000003">
    <property type="entry name" value="3-hydroxydecanoyl-[acyl-carrier-protein] dehydratase"/>
    <property type="match status" value="1"/>
</dbReference>
<dbReference type="Gene3D" id="3.10.129.10">
    <property type="entry name" value="Hotdog Thioesterase"/>
    <property type="match status" value="1"/>
</dbReference>
<dbReference type="HAMAP" id="MF_00405">
    <property type="entry name" value="FabA"/>
    <property type="match status" value="1"/>
</dbReference>
<dbReference type="InterPro" id="IPR010083">
    <property type="entry name" value="FabA"/>
</dbReference>
<dbReference type="InterPro" id="IPR013114">
    <property type="entry name" value="FabA_FabZ"/>
</dbReference>
<dbReference type="InterPro" id="IPR029069">
    <property type="entry name" value="HotDog_dom_sf"/>
</dbReference>
<dbReference type="NCBIfam" id="TIGR01749">
    <property type="entry name" value="fabA"/>
    <property type="match status" value="1"/>
</dbReference>
<dbReference type="NCBIfam" id="NF003509">
    <property type="entry name" value="PRK05174.1"/>
    <property type="match status" value="1"/>
</dbReference>
<dbReference type="PANTHER" id="PTHR30272">
    <property type="entry name" value="3-HYDROXYACYL-[ACYL-CARRIER-PROTEIN] DEHYDRATASE"/>
    <property type="match status" value="1"/>
</dbReference>
<dbReference type="PANTHER" id="PTHR30272:SF8">
    <property type="entry name" value="3-HYDROXYDECANOYL-[ACYL-CARRIER-PROTEIN] DEHYDRATASE"/>
    <property type="match status" value="1"/>
</dbReference>
<dbReference type="Pfam" id="PF07977">
    <property type="entry name" value="FabA"/>
    <property type="match status" value="1"/>
</dbReference>
<dbReference type="SUPFAM" id="SSF54637">
    <property type="entry name" value="Thioesterase/thiol ester dehydrase-isomerase"/>
    <property type="match status" value="1"/>
</dbReference>
<reference key="1">
    <citation type="journal article" date="2002" name="Environ. Microbiol.">
        <title>Complete genome sequence and comparative analysis of the metabolically versatile Pseudomonas putida KT2440.</title>
        <authorList>
            <person name="Nelson K.E."/>
            <person name="Weinel C."/>
            <person name="Paulsen I.T."/>
            <person name="Dodson R.J."/>
            <person name="Hilbert H."/>
            <person name="Martins dos Santos V.A.P."/>
            <person name="Fouts D.E."/>
            <person name="Gill S.R."/>
            <person name="Pop M."/>
            <person name="Holmes M."/>
            <person name="Brinkac L.M."/>
            <person name="Beanan M.J."/>
            <person name="DeBoy R.T."/>
            <person name="Daugherty S.C."/>
            <person name="Kolonay J.F."/>
            <person name="Madupu R."/>
            <person name="Nelson W.C."/>
            <person name="White O."/>
            <person name="Peterson J.D."/>
            <person name="Khouri H.M."/>
            <person name="Hance I."/>
            <person name="Chris Lee P."/>
            <person name="Holtzapple E.K."/>
            <person name="Scanlan D."/>
            <person name="Tran K."/>
            <person name="Moazzez A."/>
            <person name="Utterback T.R."/>
            <person name="Rizzo M."/>
            <person name="Lee K."/>
            <person name="Kosack D."/>
            <person name="Moestl D."/>
            <person name="Wedler H."/>
            <person name="Lauber J."/>
            <person name="Stjepandic D."/>
            <person name="Hoheisel J."/>
            <person name="Straetz M."/>
            <person name="Heim S."/>
            <person name="Kiewitz C."/>
            <person name="Eisen J.A."/>
            <person name="Timmis K.N."/>
            <person name="Duesterhoeft A."/>
            <person name="Tuemmler B."/>
            <person name="Fraser C.M."/>
        </authorList>
    </citation>
    <scope>NUCLEOTIDE SEQUENCE [LARGE SCALE GENOMIC DNA]</scope>
    <source>
        <strain>ATCC 47054 / DSM 6125 / CFBP 8728 / NCIMB 11950 / KT2440</strain>
    </source>
</reference>
<keyword id="KW-0963">Cytoplasm</keyword>
<keyword id="KW-0275">Fatty acid biosynthesis</keyword>
<keyword id="KW-0276">Fatty acid metabolism</keyword>
<keyword id="KW-0413">Isomerase</keyword>
<keyword id="KW-0444">Lipid biosynthesis</keyword>
<keyword id="KW-0443">Lipid metabolism</keyword>
<keyword id="KW-0456">Lyase</keyword>
<keyword id="KW-1185">Reference proteome</keyword>
<gene>
    <name evidence="1" type="primary">fabA</name>
    <name type="ordered locus">PP_4174</name>
</gene>